<gene>
    <name type="primary">aps3</name>
    <name type="ORF">SPAC30D11.05</name>
</gene>
<proteinExistence type="inferred from homology"/>
<accession>Q09905</accession>
<comment type="function">
    <text evidence="1">Part of the AP-3 complex, an adaptor-related complex which is not clathrin-associated. The complex is associated with the Golgi region as well as more peripheral structures. It facilitates the budding of vesicles from the Golgi membrane and may be directly involved in trafficking to the vacuole (By similarity).</text>
</comment>
<comment type="subunit">
    <text evidence="1">Adaptor protein complex 3 (AP-3) is a heterotetramer composed of 2 large adaptins (apl5 and apl6), a medium adaptin (apm3) and a small adaptin (aps3).</text>
</comment>
<comment type="subcellular location">
    <subcellularLocation>
        <location evidence="2">Golgi apparatus</location>
    </subcellularLocation>
    <subcellularLocation>
        <location evidence="2">Cytoplasmic vesicle membrane</location>
        <topology evidence="2">Peripheral membrane protein</topology>
        <orientation evidence="2">Cytoplasmic side</orientation>
    </subcellularLocation>
    <text evidence="2">Component of the coat surrounding the cytoplasmic face of coated vesicles located at the Golgi complex.</text>
</comment>
<comment type="similarity">
    <text evidence="3">Belongs to the adaptor complexes small subunit family.</text>
</comment>
<dbReference type="EMBL" id="CU329670">
    <property type="protein sequence ID" value="CAA91891.1"/>
    <property type="molecule type" value="Genomic_DNA"/>
</dbReference>
<dbReference type="PIR" id="T38594">
    <property type="entry name" value="S62563"/>
</dbReference>
<dbReference type="RefSeq" id="NP_593212.1">
    <property type="nucleotide sequence ID" value="NM_001018608.2"/>
</dbReference>
<dbReference type="SMR" id="Q09905"/>
<dbReference type="BioGRID" id="278590">
    <property type="interactions" value="2"/>
</dbReference>
<dbReference type="FunCoup" id="Q09905">
    <property type="interactions" value="491"/>
</dbReference>
<dbReference type="STRING" id="284812.Q09905"/>
<dbReference type="PaxDb" id="4896-SPAC30D11.05.1"/>
<dbReference type="EnsemblFungi" id="SPAC30D11.05.1">
    <property type="protein sequence ID" value="SPAC30D11.05.1:pep"/>
    <property type="gene ID" value="SPAC30D11.05"/>
</dbReference>
<dbReference type="GeneID" id="2542114"/>
<dbReference type="KEGG" id="spo:2542114"/>
<dbReference type="PomBase" id="SPAC30D11.05">
    <property type="gene designation" value="aps3"/>
</dbReference>
<dbReference type="VEuPathDB" id="FungiDB:SPAC30D11.05"/>
<dbReference type="eggNOG" id="KOG0936">
    <property type="taxonomic scope" value="Eukaryota"/>
</dbReference>
<dbReference type="HOGENOM" id="CLU_061221_2_2_1"/>
<dbReference type="InParanoid" id="Q09905"/>
<dbReference type="OMA" id="DLIFNWQ"/>
<dbReference type="PhylomeDB" id="Q09905"/>
<dbReference type="PRO" id="PR:Q09905"/>
<dbReference type="Proteomes" id="UP000002485">
    <property type="component" value="Chromosome I"/>
</dbReference>
<dbReference type="GO" id="GO:0030123">
    <property type="term" value="C:AP-3 adaptor complex"/>
    <property type="evidence" value="ECO:0000266"/>
    <property type="project" value="PomBase"/>
</dbReference>
<dbReference type="GO" id="GO:0030659">
    <property type="term" value="C:cytoplasmic vesicle membrane"/>
    <property type="evidence" value="ECO:0007669"/>
    <property type="project" value="UniProtKB-SubCell"/>
</dbReference>
<dbReference type="GO" id="GO:0005829">
    <property type="term" value="C:cytosol"/>
    <property type="evidence" value="ECO:0007005"/>
    <property type="project" value="PomBase"/>
</dbReference>
<dbReference type="GO" id="GO:0005794">
    <property type="term" value="C:Golgi apparatus"/>
    <property type="evidence" value="ECO:0007669"/>
    <property type="project" value="UniProtKB-SubCell"/>
</dbReference>
<dbReference type="GO" id="GO:0043231">
    <property type="term" value="C:intracellular membrane-bounded organelle"/>
    <property type="evidence" value="ECO:0000318"/>
    <property type="project" value="GO_Central"/>
</dbReference>
<dbReference type="GO" id="GO:0005634">
    <property type="term" value="C:nucleus"/>
    <property type="evidence" value="ECO:0007005"/>
    <property type="project" value="PomBase"/>
</dbReference>
<dbReference type="GO" id="GO:0006896">
    <property type="term" value="P:Golgi to vacuole transport"/>
    <property type="evidence" value="ECO:0000266"/>
    <property type="project" value="PomBase"/>
</dbReference>
<dbReference type="GO" id="GO:0006886">
    <property type="term" value="P:intracellular protein transport"/>
    <property type="evidence" value="ECO:0000305"/>
    <property type="project" value="PomBase"/>
</dbReference>
<dbReference type="GO" id="GO:0016192">
    <property type="term" value="P:vesicle-mediated transport"/>
    <property type="evidence" value="ECO:0000318"/>
    <property type="project" value="GO_Central"/>
</dbReference>
<dbReference type="FunFam" id="3.30.450.60:FF:000001">
    <property type="entry name" value="AP complex subunit sigma"/>
    <property type="match status" value="1"/>
</dbReference>
<dbReference type="Gene3D" id="3.30.450.60">
    <property type="match status" value="1"/>
</dbReference>
<dbReference type="InterPro" id="IPR016635">
    <property type="entry name" value="AP_complex_ssu"/>
</dbReference>
<dbReference type="InterPro" id="IPR022775">
    <property type="entry name" value="AP_mu_sigma_su"/>
</dbReference>
<dbReference type="InterPro" id="IPR000804">
    <property type="entry name" value="Clathrin_sm-chain_CS"/>
</dbReference>
<dbReference type="InterPro" id="IPR011012">
    <property type="entry name" value="Longin-like_dom_sf"/>
</dbReference>
<dbReference type="PANTHER" id="PTHR11753">
    <property type="entry name" value="ADAPTOR COMPLEXES SMALL SUBUNIT FAMILY"/>
    <property type="match status" value="1"/>
</dbReference>
<dbReference type="Pfam" id="PF01217">
    <property type="entry name" value="Clat_adaptor_s"/>
    <property type="match status" value="1"/>
</dbReference>
<dbReference type="PIRSF" id="PIRSF015588">
    <property type="entry name" value="AP_complex_sigma"/>
    <property type="match status" value="1"/>
</dbReference>
<dbReference type="SUPFAM" id="SSF64356">
    <property type="entry name" value="SNARE-like"/>
    <property type="match status" value="1"/>
</dbReference>
<dbReference type="PROSITE" id="PS00989">
    <property type="entry name" value="CLAT_ADAPTOR_S"/>
    <property type="match status" value="1"/>
</dbReference>
<protein>
    <recommendedName>
        <fullName>AP-3 complex subunit sigma</fullName>
    </recommendedName>
    <alternativeName>
        <fullName>AP-3 complex sigma3A subunit</fullName>
    </alternativeName>
    <alternativeName>
        <fullName>Adaptor-related protein complex 3 subunit sigma</fullName>
    </alternativeName>
    <alternativeName>
        <fullName>Clathrin-associated/assembly/adaptor protein, small 3</fullName>
    </alternativeName>
    <alternativeName>
        <fullName>Sigma-adaptin 3A</fullName>
    </alternativeName>
    <alternativeName>
        <fullName>Sigma3-adaptin</fullName>
    </alternativeName>
</protein>
<sequence length="165" mass="18643">MIYAVFIFNNKGKPRLTKFYTPIDESIQQKLIGDIYAAVSTRPPTACNFLESNLIAGKNRIIYRQYATLYFVFVVDEGESELGILDLIQVFVEALDRCFNNVCELDLVFKFQEIHAILAEVVSGGLVLETNLNEIVLAAQNQMPKTKRSNAMPFSNTLSSFATRF</sequence>
<reference key="1">
    <citation type="journal article" date="2002" name="Nature">
        <title>The genome sequence of Schizosaccharomyces pombe.</title>
        <authorList>
            <person name="Wood V."/>
            <person name="Gwilliam R."/>
            <person name="Rajandream M.A."/>
            <person name="Lyne M.H."/>
            <person name="Lyne R."/>
            <person name="Stewart A."/>
            <person name="Sgouros J.G."/>
            <person name="Peat N."/>
            <person name="Hayles J."/>
            <person name="Baker S.G."/>
            <person name="Basham D."/>
            <person name="Bowman S."/>
            <person name="Brooks K."/>
            <person name="Brown D."/>
            <person name="Brown S."/>
            <person name="Chillingworth T."/>
            <person name="Churcher C.M."/>
            <person name="Collins M."/>
            <person name="Connor R."/>
            <person name="Cronin A."/>
            <person name="Davis P."/>
            <person name="Feltwell T."/>
            <person name="Fraser A."/>
            <person name="Gentles S."/>
            <person name="Goble A."/>
            <person name="Hamlin N."/>
            <person name="Harris D.E."/>
            <person name="Hidalgo J."/>
            <person name="Hodgson G."/>
            <person name="Holroyd S."/>
            <person name="Hornsby T."/>
            <person name="Howarth S."/>
            <person name="Huckle E.J."/>
            <person name="Hunt S."/>
            <person name="Jagels K."/>
            <person name="James K.D."/>
            <person name="Jones L."/>
            <person name="Jones M."/>
            <person name="Leather S."/>
            <person name="McDonald S."/>
            <person name="McLean J."/>
            <person name="Mooney P."/>
            <person name="Moule S."/>
            <person name="Mungall K.L."/>
            <person name="Murphy L.D."/>
            <person name="Niblett D."/>
            <person name="Odell C."/>
            <person name="Oliver K."/>
            <person name="O'Neil S."/>
            <person name="Pearson D."/>
            <person name="Quail M.A."/>
            <person name="Rabbinowitsch E."/>
            <person name="Rutherford K.M."/>
            <person name="Rutter S."/>
            <person name="Saunders D."/>
            <person name="Seeger K."/>
            <person name="Sharp S."/>
            <person name="Skelton J."/>
            <person name="Simmonds M.N."/>
            <person name="Squares R."/>
            <person name="Squares S."/>
            <person name="Stevens K."/>
            <person name="Taylor K."/>
            <person name="Taylor R.G."/>
            <person name="Tivey A."/>
            <person name="Walsh S.V."/>
            <person name="Warren T."/>
            <person name="Whitehead S."/>
            <person name="Woodward J.R."/>
            <person name="Volckaert G."/>
            <person name="Aert R."/>
            <person name="Robben J."/>
            <person name="Grymonprez B."/>
            <person name="Weltjens I."/>
            <person name="Vanstreels E."/>
            <person name="Rieger M."/>
            <person name="Schaefer M."/>
            <person name="Mueller-Auer S."/>
            <person name="Gabel C."/>
            <person name="Fuchs M."/>
            <person name="Duesterhoeft A."/>
            <person name="Fritzc C."/>
            <person name="Holzer E."/>
            <person name="Moestl D."/>
            <person name="Hilbert H."/>
            <person name="Borzym K."/>
            <person name="Langer I."/>
            <person name="Beck A."/>
            <person name="Lehrach H."/>
            <person name="Reinhardt R."/>
            <person name="Pohl T.M."/>
            <person name="Eger P."/>
            <person name="Zimmermann W."/>
            <person name="Wedler H."/>
            <person name="Wambutt R."/>
            <person name="Purnelle B."/>
            <person name="Goffeau A."/>
            <person name="Cadieu E."/>
            <person name="Dreano S."/>
            <person name="Gloux S."/>
            <person name="Lelaure V."/>
            <person name="Mottier S."/>
            <person name="Galibert F."/>
            <person name="Aves S.J."/>
            <person name="Xiang Z."/>
            <person name="Hunt C."/>
            <person name="Moore K."/>
            <person name="Hurst S.M."/>
            <person name="Lucas M."/>
            <person name="Rochet M."/>
            <person name="Gaillardin C."/>
            <person name="Tallada V.A."/>
            <person name="Garzon A."/>
            <person name="Thode G."/>
            <person name="Daga R.R."/>
            <person name="Cruzado L."/>
            <person name="Jimenez J."/>
            <person name="Sanchez M."/>
            <person name="del Rey F."/>
            <person name="Benito J."/>
            <person name="Dominguez A."/>
            <person name="Revuelta J.L."/>
            <person name="Moreno S."/>
            <person name="Armstrong J."/>
            <person name="Forsburg S.L."/>
            <person name="Cerutti L."/>
            <person name="Lowe T."/>
            <person name="McCombie W.R."/>
            <person name="Paulsen I."/>
            <person name="Potashkin J."/>
            <person name="Shpakovski G.V."/>
            <person name="Ussery D."/>
            <person name="Barrell B.G."/>
            <person name="Nurse P."/>
        </authorList>
    </citation>
    <scope>NUCLEOTIDE SEQUENCE [LARGE SCALE GENOMIC DNA]</scope>
    <source>
        <strain>972 / ATCC 24843</strain>
    </source>
</reference>
<organism>
    <name type="scientific">Schizosaccharomyces pombe (strain 972 / ATCC 24843)</name>
    <name type="common">Fission yeast</name>
    <dbReference type="NCBI Taxonomy" id="284812"/>
    <lineage>
        <taxon>Eukaryota</taxon>
        <taxon>Fungi</taxon>
        <taxon>Dikarya</taxon>
        <taxon>Ascomycota</taxon>
        <taxon>Taphrinomycotina</taxon>
        <taxon>Schizosaccharomycetes</taxon>
        <taxon>Schizosaccharomycetales</taxon>
        <taxon>Schizosaccharomycetaceae</taxon>
        <taxon>Schizosaccharomyces</taxon>
    </lineage>
</organism>
<keyword id="KW-0968">Cytoplasmic vesicle</keyword>
<keyword id="KW-0333">Golgi apparatus</keyword>
<keyword id="KW-0472">Membrane</keyword>
<keyword id="KW-0653">Protein transport</keyword>
<keyword id="KW-1185">Reference proteome</keyword>
<keyword id="KW-0813">Transport</keyword>
<feature type="chain" id="PRO_0000193823" description="AP-3 complex subunit sigma">
    <location>
        <begin position="1"/>
        <end position="165"/>
    </location>
</feature>
<evidence type="ECO:0000250" key="1"/>
<evidence type="ECO:0000250" key="2">
    <source>
        <dbReference type="UniProtKB" id="P47064"/>
    </source>
</evidence>
<evidence type="ECO:0000305" key="3"/>
<name>AP3S_SCHPO</name>